<protein>
    <recommendedName>
        <fullName evidence="3">2-methylisocitrate lyase</fullName>
        <shortName evidence="4">2-MIC</shortName>
        <shortName evidence="4">MICL</shortName>
        <ecNumber evidence="2">4.1.3.-</ecNumber>
    </recommendedName>
</protein>
<proteinExistence type="evidence at protein level"/>
<keyword id="KW-0456">Lyase</keyword>
<keyword id="KW-0460">Magnesium</keyword>
<keyword id="KW-0479">Metal-binding</keyword>
<keyword id="KW-1185">Reference proteome</keyword>
<evidence type="ECO:0000250" key="1">
    <source>
        <dbReference type="UniProtKB" id="P77541"/>
    </source>
</evidence>
<evidence type="ECO:0000269" key="2">
    <source>
    </source>
</evidence>
<evidence type="ECO:0000303" key="3">
    <source>
    </source>
</evidence>
<evidence type="ECO:0000305" key="4"/>
<name>MMGF_BACSU</name>
<dbReference type="EC" id="4.1.3.-" evidence="2"/>
<dbReference type="EMBL" id="D84432">
    <property type="protein sequence ID" value="BAA12592.1"/>
    <property type="molecule type" value="Genomic_DNA"/>
</dbReference>
<dbReference type="EMBL" id="AL009126">
    <property type="protein sequence ID" value="CAB14343.1"/>
    <property type="molecule type" value="Genomic_DNA"/>
</dbReference>
<dbReference type="PIR" id="G69961">
    <property type="entry name" value="G69961"/>
</dbReference>
<dbReference type="RefSeq" id="NP_390292.1">
    <property type="nucleotide sequence ID" value="NC_000964.3"/>
</dbReference>
<dbReference type="RefSeq" id="WP_004398772.1">
    <property type="nucleotide sequence ID" value="NZ_OZ025638.1"/>
</dbReference>
<dbReference type="SMR" id="P54528"/>
<dbReference type="FunCoup" id="P54528">
    <property type="interactions" value="361"/>
</dbReference>
<dbReference type="STRING" id="224308.BSU24120"/>
<dbReference type="PaxDb" id="224308-BSU24120"/>
<dbReference type="EnsemblBacteria" id="CAB14343">
    <property type="protein sequence ID" value="CAB14343"/>
    <property type="gene ID" value="BSU_24120"/>
</dbReference>
<dbReference type="GeneID" id="938668"/>
<dbReference type="KEGG" id="bsu:BSU24120"/>
<dbReference type="PATRIC" id="fig|224308.179.peg.2626"/>
<dbReference type="eggNOG" id="COG2513">
    <property type="taxonomic scope" value="Bacteria"/>
</dbReference>
<dbReference type="InParanoid" id="P54528"/>
<dbReference type="OrthoDB" id="8629576at2"/>
<dbReference type="PhylomeDB" id="P54528"/>
<dbReference type="BioCyc" id="BSUB:BSU24120-MONOMER"/>
<dbReference type="BRENDA" id="4.1.3.30">
    <property type="organism ID" value="658"/>
</dbReference>
<dbReference type="Proteomes" id="UP000001570">
    <property type="component" value="Chromosome"/>
</dbReference>
<dbReference type="GO" id="GO:0046872">
    <property type="term" value="F:metal ion binding"/>
    <property type="evidence" value="ECO:0007669"/>
    <property type="project" value="UniProtKB-KW"/>
</dbReference>
<dbReference type="GO" id="GO:0046421">
    <property type="term" value="F:methylisocitrate lyase activity"/>
    <property type="evidence" value="ECO:0000318"/>
    <property type="project" value="GO_Central"/>
</dbReference>
<dbReference type="GO" id="GO:0019629">
    <property type="term" value="P:propionate catabolic process, 2-methylcitrate cycle"/>
    <property type="evidence" value="ECO:0000318"/>
    <property type="project" value="GO_Central"/>
</dbReference>
<dbReference type="CDD" id="cd00377">
    <property type="entry name" value="ICL_PEPM"/>
    <property type="match status" value="1"/>
</dbReference>
<dbReference type="FunFam" id="3.20.20.60:FF:000009">
    <property type="entry name" value="2-methylisocitrate lyase"/>
    <property type="match status" value="1"/>
</dbReference>
<dbReference type="Gene3D" id="3.20.20.60">
    <property type="entry name" value="Phosphoenolpyruvate-binding domains"/>
    <property type="match status" value="1"/>
</dbReference>
<dbReference type="InterPro" id="IPR039556">
    <property type="entry name" value="ICL/PEPM"/>
</dbReference>
<dbReference type="InterPro" id="IPR018523">
    <property type="entry name" value="Isocitrate_lyase_ph_CS"/>
</dbReference>
<dbReference type="InterPro" id="IPR012695">
    <property type="entry name" value="PrpB"/>
</dbReference>
<dbReference type="InterPro" id="IPR015813">
    <property type="entry name" value="Pyrv/PenolPyrv_kinase-like_dom"/>
</dbReference>
<dbReference type="InterPro" id="IPR040442">
    <property type="entry name" value="Pyrv_kinase-like_dom_sf"/>
</dbReference>
<dbReference type="NCBIfam" id="TIGR02317">
    <property type="entry name" value="prpB"/>
    <property type="match status" value="1"/>
</dbReference>
<dbReference type="PANTHER" id="PTHR42905:SF5">
    <property type="entry name" value="CARBOXYVINYL-CARBOXYPHOSPHONATE PHOSPHORYLMUTASE, CHLOROPLASTIC"/>
    <property type="match status" value="1"/>
</dbReference>
<dbReference type="PANTHER" id="PTHR42905">
    <property type="entry name" value="PHOSPHOENOLPYRUVATE CARBOXYLASE"/>
    <property type="match status" value="1"/>
</dbReference>
<dbReference type="Pfam" id="PF13714">
    <property type="entry name" value="PEP_mutase"/>
    <property type="match status" value="1"/>
</dbReference>
<dbReference type="SUPFAM" id="SSF51621">
    <property type="entry name" value="Phosphoenolpyruvate/pyruvate domain"/>
    <property type="match status" value="1"/>
</dbReference>
<dbReference type="PROSITE" id="PS00161">
    <property type="entry name" value="ISOCITRATE_LYASE"/>
    <property type="match status" value="1"/>
</dbReference>
<comment type="function">
    <text evidence="2">Involved in the methylcitric acid cycle. Catalyzes the cleavage of 2-methylisocitrate to yield pyruvate and succinate.</text>
</comment>
<comment type="catalytic activity">
    <reaction evidence="2">
        <text>3-hydroxybutane-1,2,3-tricarboxylate = pyruvate + succinate</text>
        <dbReference type="Rhea" id="RHEA:57504"/>
        <dbReference type="ChEBI" id="CHEBI:15361"/>
        <dbReference type="ChEBI" id="CHEBI:30031"/>
        <dbReference type="ChEBI" id="CHEBI:141790"/>
    </reaction>
</comment>
<comment type="cofactor">
    <cofactor evidence="1">
        <name>Mg(2+)</name>
        <dbReference type="ChEBI" id="CHEBI:18420"/>
    </cofactor>
</comment>
<comment type="similarity">
    <text evidence="4">Belongs to the isocitrate lyase/PEP mutase superfamily. Methylisocitrate lyase family.</text>
</comment>
<sequence>MSWIVNKQSSQEELAGRFRKLMSAPDILQIPGAHDGMAALLAKEAGFSAIYLSGAAYTASRGLPDLGIITSAEIAERAKDLVRAADLPLLVDIDTGFGGVLNAARTAREMLEARVAAVQMEDQQLPKKCGHLNGKQLVPIKEMAQKIKAIKQAAPSLIVVARTDARAQEGLDAAIKRSEAYIEAGADAIFPEALQAENEFRQFAERIPVPLLANMTEFGKTPYYRADEFEDMGFHMVIYPVTSLRAAAKACERMFGLMKEHGSQKEGLHDMQTRKELYDTISYYDYEALDKTIAKTVLPDE</sequence>
<organism>
    <name type="scientific">Bacillus subtilis (strain 168)</name>
    <dbReference type="NCBI Taxonomy" id="224308"/>
    <lineage>
        <taxon>Bacteria</taxon>
        <taxon>Bacillati</taxon>
        <taxon>Bacillota</taxon>
        <taxon>Bacilli</taxon>
        <taxon>Bacillales</taxon>
        <taxon>Bacillaceae</taxon>
        <taxon>Bacillus</taxon>
    </lineage>
</organism>
<accession>P54528</accession>
<gene>
    <name evidence="3" type="primary">mmgF</name>
    <name type="synonym">prpB</name>
    <name type="synonym">yqiQ</name>
    <name type="ordered locus">BSU24120</name>
</gene>
<feature type="chain" id="PRO_0000068820" description="2-methylisocitrate lyase">
    <location>
        <begin position="1"/>
        <end position="301"/>
    </location>
</feature>
<feature type="binding site" evidence="1">
    <location>
        <begin position="53"/>
        <end position="55"/>
    </location>
    <ligand>
        <name>substrate</name>
    </ligand>
</feature>
<feature type="binding site" evidence="1">
    <location>
        <position position="92"/>
    </location>
    <ligand>
        <name>Mg(2+)</name>
        <dbReference type="ChEBI" id="CHEBI:18420"/>
    </ligand>
</feature>
<feature type="binding site" evidence="1">
    <location>
        <position position="94"/>
    </location>
    <ligand>
        <name>Mg(2+)</name>
        <dbReference type="ChEBI" id="CHEBI:18420"/>
    </ligand>
</feature>
<feature type="binding site" evidence="1">
    <location>
        <begin position="129"/>
        <end position="130"/>
    </location>
    <ligand>
        <name>substrate</name>
    </ligand>
</feature>
<feature type="binding site" evidence="1">
    <location>
        <position position="162"/>
    </location>
    <ligand>
        <name>substrate</name>
    </ligand>
</feature>
<feature type="binding site" evidence="1">
    <location>
        <position position="192"/>
    </location>
    <ligand>
        <name>substrate</name>
    </ligand>
</feature>
<feature type="binding site" evidence="1">
    <location>
        <begin position="214"/>
        <end position="216"/>
    </location>
    <ligand>
        <name>substrate</name>
    </ligand>
</feature>
<feature type="binding site" evidence="1">
    <location>
        <position position="245"/>
    </location>
    <ligand>
        <name>substrate</name>
    </ligand>
</feature>
<feature type="binding site" evidence="1">
    <location>
        <position position="274"/>
    </location>
    <ligand>
        <name>substrate</name>
    </ligand>
</feature>
<reference key="1">
    <citation type="journal article" date="1996" name="Microbiology">
        <title>Systematic sequencing of the 283 kb 210 degrees-232 degrees region of the Bacillus subtilis genome containing the skin element and many sporulation genes.</title>
        <authorList>
            <person name="Mizuno M."/>
            <person name="Masuda S."/>
            <person name="Takemaru K."/>
            <person name="Hosono S."/>
            <person name="Sato T."/>
            <person name="Takeuchi M."/>
            <person name="Kobayashi Y."/>
        </authorList>
    </citation>
    <scope>NUCLEOTIDE SEQUENCE [GENOMIC DNA]</scope>
    <source>
        <strain>168 / JH642</strain>
    </source>
</reference>
<reference key="2">
    <citation type="journal article" date="1997" name="Nature">
        <title>The complete genome sequence of the Gram-positive bacterium Bacillus subtilis.</title>
        <authorList>
            <person name="Kunst F."/>
            <person name="Ogasawara N."/>
            <person name="Moszer I."/>
            <person name="Albertini A.M."/>
            <person name="Alloni G."/>
            <person name="Azevedo V."/>
            <person name="Bertero M.G."/>
            <person name="Bessieres P."/>
            <person name="Bolotin A."/>
            <person name="Borchert S."/>
            <person name="Borriss R."/>
            <person name="Boursier L."/>
            <person name="Brans A."/>
            <person name="Braun M."/>
            <person name="Brignell S.C."/>
            <person name="Bron S."/>
            <person name="Brouillet S."/>
            <person name="Bruschi C.V."/>
            <person name="Caldwell B."/>
            <person name="Capuano V."/>
            <person name="Carter N.M."/>
            <person name="Choi S.-K."/>
            <person name="Codani J.-J."/>
            <person name="Connerton I.F."/>
            <person name="Cummings N.J."/>
            <person name="Daniel R.A."/>
            <person name="Denizot F."/>
            <person name="Devine K.M."/>
            <person name="Duesterhoeft A."/>
            <person name="Ehrlich S.D."/>
            <person name="Emmerson P.T."/>
            <person name="Entian K.-D."/>
            <person name="Errington J."/>
            <person name="Fabret C."/>
            <person name="Ferrari E."/>
            <person name="Foulger D."/>
            <person name="Fritz C."/>
            <person name="Fujita M."/>
            <person name="Fujita Y."/>
            <person name="Fuma S."/>
            <person name="Galizzi A."/>
            <person name="Galleron N."/>
            <person name="Ghim S.-Y."/>
            <person name="Glaser P."/>
            <person name="Goffeau A."/>
            <person name="Golightly E.J."/>
            <person name="Grandi G."/>
            <person name="Guiseppi G."/>
            <person name="Guy B.J."/>
            <person name="Haga K."/>
            <person name="Haiech J."/>
            <person name="Harwood C.R."/>
            <person name="Henaut A."/>
            <person name="Hilbert H."/>
            <person name="Holsappel S."/>
            <person name="Hosono S."/>
            <person name="Hullo M.-F."/>
            <person name="Itaya M."/>
            <person name="Jones L.-M."/>
            <person name="Joris B."/>
            <person name="Karamata D."/>
            <person name="Kasahara Y."/>
            <person name="Klaerr-Blanchard M."/>
            <person name="Klein C."/>
            <person name="Kobayashi Y."/>
            <person name="Koetter P."/>
            <person name="Koningstein G."/>
            <person name="Krogh S."/>
            <person name="Kumano M."/>
            <person name="Kurita K."/>
            <person name="Lapidus A."/>
            <person name="Lardinois S."/>
            <person name="Lauber J."/>
            <person name="Lazarevic V."/>
            <person name="Lee S.-M."/>
            <person name="Levine A."/>
            <person name="Liu H."/>
            <person name="Masuda S."/>
            <person name="Mauel C."/>
            <person name="Medigue C."/>
            <person name="Medina N."/>
            <person name="Mellado R.P."/>
            <person name="Mizuno M."/>
            <person name="Moestl D."/>
            <person name="Nakai S."/>
            <person name="Noback M."/>
            <person name="Noone D."/>
            <person name="O'Reilly M."/>
            <person name="Ogawa K."/>
            <person name="Ogiwara A."/>
            <person name="Oudega B."/>
            <person name="Park S.-H."/>
            <person name="Parro V."/>
            <person name="Pohl T.M."/>
            <person name="Portetelle D."/>
            <person name="Porwollik S."/>
            <person name="Prescott A.M."/>
            <person name="Presecan E."/>
            <person name="Pujic P."/>
            <person name="Purnelle B."/>
            <person name="Rapoport G."/>
            <person name="Rey M."/>
            <person name="Reynolds S."/>
            <person name="Rieger M."/>
            <person name="Rivolta C."/>
            <person name="Rocha E."/>
            <person name="Roche B."/>
            <person name="Rose M."/>
            <person name="Sadaie Y."/>
            <person name="Sato T."/>
            <person name="Scanlan E."/>
            <person name="Schleich S."/>
            <person name="Schroeter R."/>
            <person name="Scoffone F."/>
            <person name="Sekiguchi J."/>
            <person name="Sekowska A."/>
            <person name="Seror S.J."/>
            <person name="Serror P."/>
            <person name="Shin B.-S."/>
            <person name="Soldo B."/>
            <person name="Sorokin A."/>
            <person name="Tacconi E."/>
            <person name="Takagi T."/>
            <person name="Takahashi H."/>
            <person name="Takemaru K."/>
            <person name="Takeuchi M."/>
            <person name="Tamakoshi A."/>
            <person name="Tanaka T."/>
            <person name="Terpstra P."/>
            <person name="Tognoni A."/>
            <person name="Tosato V."/>
            <person name="Uchiyama S."/>
            <person name="Vandenbol M."/>
            <person name="Vannier F."/>
            <person name="Vassarotti A."/>
            <person name="Viari A."/>
            <person name="Wambutt R."/>
            <person name="Wedler E."/>
            <person name="Wedler H."/>
            <person name="Weitzenegger T."/>
            <person name="Winters P."/>
            <person name="Wipat A."/>
            <person name="Yamamoto H."/>
            <person name="Yamane K."/>
            <person name="Yasumoto K."/>
            <person name="Yata K."/>
            <person name="Yoshida K."/>
            <person name="Yoshikawa H.-F."/>
            <person name="Zumstein E."/>
            <person name="Yoshikawa H."/>
            <person name="Danchin A."/>
        </authorList>
    </citation>
    <scope>NUCLEOTIDE SEQUENCE [LARGE SCALE GENOMIC DNA]</scope>
    <source>
        <strain>168</strain>
    </source>
</reference>
<reference key="3">
    <citation type="journal article" date="2017" name="Biochemistry">
        <title>First biochemical characterization of a methylcitric acid cycle from Bacillus subtilis strain 168.</title>
        <authorList>
            <person name="Reddick J.J."/>
            <person name="Sirkisoon S."/>
            <person name="Dahal R.A."/>
            <person name="Hardesty G."/>
            <person name="Hage N.E."/>
            <person name="Booth W.T."/>
            <person name="Quattlebaum A.L."/>
            <person name="Mills S.N."/>
            <person name="Meadows V.G."/>
            <person name="Adams S.L.H."/>
            <person name="Doyle J.S."/>
            <person name="Kiel B.E."/>
        </authorList>
    </citation>
    <scope>FUNCTION</scope>
    <scope>CATALYTIC ACTIVITY</scope>
    <source>
        <strain>168</strain>
    </source>
</reference>